<accession>Q1J9R7</accession>
<proteinExistence type="inferred from homology"/>
<evidence type="ECO:0000255" key="1">
    <source>
        <dbReference type="HAMAP-Rule" id="MF_00163"/>
    </source>
</evidence>
<organism>
    <name type="scientific">Streptococcus pyogenes serotype M12 (strain MGAS2096)</name>
    <dbReference type="NCBI Taxonomy" id="370553"/>
    <lineage>
        <taxon>Bacteria</taxon>
        <taxon>Bacillati</taxon>
        <taxon>Bacillota</taxon>
        <taxon>Bacilli</taxon>
        <taxon>Lactobacillales</taxon>
        <taxon>Streptococcaceae</taxon>
        <taxon>Streptococcus</taxon>
    </lineage>
</organism>
<dbReference type="EC" id="3.5.1.88" evidence="1"/>
<dbReference type="EMBL" id="CP000261">
    <property type="protein sequence ID" value="ABF36744.1"/>
    <property type="molecule type" value="Genomic_DNA"/>
</dbReference>
<dbReference type="SMR" id="Q1J9R7"/>
<dbReference type="KEGG" id="spj:MGAS2096_Spy1692"/>
<dbReference type="HOGENOM" id="CLU_061901_4_0_9"/>
<dbReference type="GO" id="GO:0046872">
    <property type="term" value="F:metal ion binding"/>
    <property type="evidence" value="ECO:0007669"/>
    <property type="project" value="UniProtKB-KW"/>
</dbReference>
<dbReference type="GO" id="GO:0042586">
    <property type="term" value="F:peptide deformylase activity"/>
    <property type="evidence" value="ECO:0007669"/>
    <property type="project" value="UniProtKB-UniRule"/>
</dbReference>
<dbReference type="GO" id="GO:0043686">
    <property type="term" value="P:co-translational protein modification"/>
    <property type="evidence" value="ECO:0007669"/>
    <property type="project" value="TreeGrafter"/>
</dbReference>
<dbReference type="GO" id="GO:0006412">
    <property type="term" value="P:translation"/>
    <property type="evidence" value="ECO:0007669"/>
    <property type="project" value="UniProtKB-UniRule"/>
</dbReference>
<dbReference type="CDD" id="cd00487">
    <property type="entry name" value="Pep_deformylase"/>
    <property type="match status" value="1"/>
</dbReference>
<dbReference type="FunFam" id="3.90.45.10:FF:000002">
    <property type="entry name" value="Peptide deformylase"/>
    <property type="match status" value="1"/>
</dbReference>
<dbReference type="Gene3D" id="3.90.45.10">
    <property type="entry name" value="Peptide deformylase"/>
    <property type="match status" value="1"/>
</dbReference>
<dbReference type="HAMAP" id="MF_00163">
    <property type="entry name" value="Pep_deformylase"/>
    <property type="match status" value="1"/>
</dbReference>
<dbReference type="InterPro" id="IPR023635">
    <property type="entry name" value="Peptide_deformylase"/>
</dbReference>
<dbReference type="InterPro" id="IPR036821">
    <property type="entry name" value="Peptide_deformylase_sf"/>
</dbReference>
<dbReference type="NCBIfam" id="TIGR00079">
    <property type="entry name" value="pept_deformyl"/>
    <property type="match status" value="1"/>
</dbReference>
<dbReference type="PANTHER" id="PTHR10458">
    <property type="entry name" value="PEPTIDE DEFORMYLASE"/>
    <property type="match status" value="1"/>
</dbReference>
<dbReference type="PANTHER" id="PTHR10458:SF8">
    <property type="entry name" value="PEPTIDE DEFORMYLASE 2"/>
    <property type="match status" value="1"/>
</dbReference>
<dbReference type="Pfam" id="PF01327">
    <property type="entry name" value="Pep_deformylase"/>
    <property type="match status" value="1"/>
</dbReference>
<dbReference type="PIRSF" id="PIRSF004749">
    <property type="entry name" value="Pep_def"/>
    <property type="match status" value="1"/>
</dbReference>
<dbReference type="PRINTS" id="PR01576">
    <property type="entry name" value="PDEFORMYLASE"/>
</dbReference>
<dbReference type="SUPFAM" id="SSF56420">
    <property type="entry name" value="Peptide deformylase"/>
    <property type="match status" value="1"/>
</dbReference>
<name>DEF_STRPB</name>
<sequence>MSAQDKLIKPSHLITMDDIIREGNPTLRAVAKEVSLPLCDEDILLGEKMMQFLKHSQDPVMAEKLGLRAGVGLAAPQIDVSKRIIAVLVPNLPDKEGNPPKEAYSWQEVLYNPKIVSHSVQDAALSDGEGCLSVDRVVEGYVVRHARVTVDYYDKEGQQHRIKLKGYNAIVVQHEIDHINGVLFYDRINAKNPFETKEELLILD</sequence>
<keyword id="KW-0378">Hydrolase</keyword>
<keyword id="KW-0408">Iron</keyword>
<keyword id="KW-0479">Metal-binding</keyword>
<keyword id="KW-0648">Protein biosynthesis</keyword>
<comment type="function">
    <text evidence="1">Removes the formyl group from the N-terminal Met of newly synthesized proteins. Requires at least a dipeptide for an efficient rate of reaction. N-terminal L-methionine is a prerequisite for activity but the enzyme has broad specificity at other positions.</text>
</comment>
<comment type="catalytic activity">
    <reaction evidence="1">
        <text>N-terminal N-formyl-L-methionyl-[peptide] + H2O = N-terminal L-methionyl-[peptide] + formate</text>
        <dbReference type="Rhea" id="RHEA:24420"/>
        <dbReference type="Rhea" id="RHEA-COMP:10639"/>
        <dbReference type="Rhea" id="RHEA-COMP:10640"/>
        <dbReference type="ChEBI" id="CHEBI:15377"/>
        <dbReference type="ChEBI" id="CHEBI:15740"/>
        <dbReference type="ChEBI" id="CHEBI:49298"/>
        <dbReference type="ChEBI" id="CHEBI:64731"/>
        <dbReference type="EC" id="3.5.1.88"/>
    </reaction>
</comment>
<comment type="cofactor">
    <cofactor evidence="1">
        <name>Fe(2+)</name>
        <dbReference type="ChEBI" id="CHEBI:29033"/>
    </cofactor>
    <text evidence="1">Binds 1 Fe(2+) ion.</text>
</comment>
<comment type="similarity">
    <text evidence="1">Belongs to the polypeptide deformylase family.</text>
</comment>
<feature type="chain" id="PRO_0000301103" description="Peptide deformylase">
    <location>
        <begin position="1"/>
        <end position="204"/>
    </location>
</feature>
<feature type="active site" evidence="1">
    <location>
        <position position="175"/>
    </location>
</feature>
<feature type="binding site" evidence="1">
    <location>
        <position position="131"/>
    </location>
    <ligand>
        <name>Fe cation</name>
        <dbReference type="ChEBI" id="CHEBI:24875"/>
    </ligand>
</feature>
<feature type="binding site" evidence="1">
    <location>
        <position position="174"/>
    </location>
    <ligand>
        <name>Fe cation</name>
        <dbReference type="ChEBI" id="CHEBI:24875"/>
    </ligand>
</feature>
<feature type="binding site" evidence="1">
    <location>
        <position position="178"/>
    </location>
    <ligand>
        <name>Fe cation</name>
        <dbReference type="ChEBI" id="CHEBI:24875"/>
    </ligand>
</feature>
<reference key="1">
    <citation type="journal article" date="2006" name="Proc. Natl. Acad. Sci. U.S.A.">
        <title>Molecular genetic anatomy of inter- and intraserotype variation in the human bacterial pathogen group A Streptococcus.</title>
        <authorList>
            <person name="Beres S.B."/>
            <person name="Richter E.W."/>
            <person name="Nagiec M.J."/>
            <person name="Sumby P."/>
            <person name="Porcella S.F."/>
            <person name="DeLeo F.R."/>
            <person name="Musser J.M."/>
        </authorList>
    </citation>
    <scope>NUCLEOTIDE SEQUENCE [LARGE SCALE GENOMIC DNA]</scope>
    <source>
        <strain>MGAS2096</strain>
    </source>
</reference>
<protein>
    <recommendedName>
        <fullName evidence="1">Peptide deformylase</fullName>
        <shortName evidence="1">PDF</shortName>
        <ecNumber evidence="1">3.5.1.88</ecNumber>
    </recommendedName>
    <alternativeName>
        <fullName evidence="1">Polypeptide deformylase</fullName>
    </alternativeName>
</protein>
<gene>
    <name evidence="1" type="primary">def</name>
    <name type="ordered locus">MGAS2096_Spy1692</name>
</gene>